<protein>
    <recommendedName>
        <fullName evidence="1">NAD(P)H-quinone oxidoreductase subunit J</fullName>
        <ecNumber evidence="1">7.1.1.-</ecNumber>
    </recommendedName>
    <alternativeName>
        <fullName>NAD(P)H dehydrogenase subunit J</fullName>
    </alternativeName>
    <alternativeName>
        <fullName evidence="1">NADH-plastoquinone oxidoreductase subunit J</fullName>
    </alternativeName>
    <alternativeName>
        <fullName evidence="1">NDH-1 subunit J</fullName>
        <shortName evidence="1">NDH-J</shortName>
    </alternativeName>
</protein>
<proteinExistence type="inferred from homology"/>
<keyword id="KW-0472">Membrane</keyword>
<keyword id="KW-0520">NAD</keyword>
<keyword id="KW-0521">NADP</keyword>
<keyword id="KW-0618">Plastoquinone</keyword>
<keyword id="KW-0874">Quinone</keyword>
<keyword id="KW-0793">Thylakoid</keyword>
<keyword id="KW-1278">Translocase</keyword>
<keyword id="KW-0813">Transport</keyword>
<name>NDHJ_PROM1</name>
<feature type="chain" id="PRO_0000358170" description="NAD(P)H-quinone oxidoreductase subunit J">
    <location>
        <begin position="1"/>
        <end position="173"/>
    </location>
</feature>
<gene>
    <name evidence="1" type="primary">ndhJ</name>
    <name type="ordered locus">NATL1_03721</name>
</gene>
<accession>A2C0C6</accession>
<organism>
    <name type="scientific">Prochlorococcus marinus (strain NATL1A)</name>
    <dbReference type="NCBI Taxonomy" id="167555"/>
    <lineage>
        <taxon>Bacteria</taxon>
        <taxon>Bacillati</taxon>
        <taxon>Cyanobacteriota</taxon>
        <taxon>Cyanophyceae</taxon>
        <taxon>Synechococcales</taxon>
        <taxon>Prochlorococcaceae</taxon>
        <taxon>Prochlorococcus</taxon>
    </lineage>
</organism>
<dbReference type="EC" id="7.1.1.-" evidence="1"/>
<dbReference type="EMBL" id="CP000553">
    <property type="protein sequence ID" value="ABM74936.1"/>
    <property type="molecule type" value="Genomic_DNA"/>
</dbReference>
<dbReference type="RefSeq" id="WP_011823137.1">
    <property type="nucleotide sequence ID" value="NC_008819.1"/>
</dbReference>
<dbReference type="SMR" id="A2C0C6"/>
<dbReference type="KEGG" id="pme:NATL1_03721"/>
<dbReference type="eggNOG" id="COG0852">
    <property type="taxonomic scope" value="Bacteria"/>
</dbReference>
<dbReference type="HOGENOM" id="CLU_042628_9_1_3"/>
<dbReference type="Proteomes" id="UP000002592">
    <property type="component" value="Chromosome"/>
</dbReference>
<dbReference type="GO" id="GO:0031676">
    <property type="term" value="C:plasma membrane-derived thylakoid membrane"/>
    <property type="evidence" value="ECO:0007669"/>
    <property type="project" value="UniProtKB-SubCell"/>
</dbReference>
<dbReference type="GO" id="GO:0008137">
    <property type="term" value="F:NADH dehydrogenase (ubiquinone) activity"/>
    <property type="evidence" value="ECO:0007669"/>
    <property type="project" value="InterPro"/>
</dbReference>
<dbReference type="GO" id="GO:0048038">
    <property type="term" value="F:quinone binding"/>
    <property type="evidence" value="ECO:0007669"/>
    <property type="project" value="UniProtKB-KW"/>
</dbReference>
<dbReference type="GO" id="GO:0019684">
    <property type="term" value="P:photosynthesis, light reaction"/>
    <property type="evidence" value="ECO:0007669"/>
    <property type="project" value="UniProtKB-UniRule"/>
</dbReference>
<dbReference type="Gene3D" id="3.30.460.80">
    <property type="entry name" value="NADH:ubiquinone oxidoreductase, 30kDa subunit"/>
    <property type="match status" value="1"/>
</dbReference>
<dbReference type="HAMAP" id="MF_01357">
    <property type="entry name" value="NDH1_NuoC"/>
    <property type="match status" value="1"/>
</dbReference>
<dbReference type="InterPro" id="IPR010218">
    <property type="entry name" value="NADH_DH_suC"/>
</dbReference>
<dbReference type="InterPro" id="IPR037232">
    <property type="entry name" value="NADH_quin_OxRdtase_su_C/D-like"/>
</dbReference>
<dbReference type="InterPro" id="IPR001268">
    <property type="entry name" value="NADH_UbQ_OxRdtase_30kDa_su"/>
</dbReference>
<dbReference type="InterPro" id="IPR020396">
    <property type="entry name" value="NADH_UbQ_OxRdtase_CS"/>
</dbReference>
<dbReference type="NCBIfam" id="NF009141">
    <property type="entry name" value="PRK12494.1"/>
    <property type="match status" value="1"/>
</dbReference>
<dbReference type="PANTHER" id="PTHR10884:SF14">
    <property type="entry name" value="NADH DEHYDROGENASE [UBIQUINONE] IRON-SULFUR PROTEIN 3, MITOCHONDRIAL"/>
    <property type="match status" value="1"/>
</dbReference>
<dbReference type="PANTHER" id="PTHR10884">
    <property type="entry name" value="NADH DEHYDROGENASE UBIQUINONE IRON-SULFUR PROTEIN 3"/>
    <property type="match status" value="1"/>
</dbReference>
<dbReference type="Pfam" id="PF00329">
    <property type="entry name" value="Complex1_30kDa"/>
    <property type="match status" value="1"/>
</dbReference>
<dbReference type="SUPFAM" id="SSF143243">
    <property type="entry name" value="Nqo5-like"/>
    <property type="match status" value="1"/>
</dbReference>
<dbReference type="PROSITE" id="PS00542">
    <property type="entry name" value="COMPLEX1_30K"/>
    <property type="match status" value="1"/>
</dbReference>
<evidence type="ECO:0000255" key="1">
    <source>
        <dbReference type="HAMAP-Rule" id="MF_01357"/>
    </source>
</evidence>
<reference key="1">
    <citation type="journal article" date="2007" name="PLoS Genet.">
        <title>Patterns and implications of gene gain and loss in the evolution of Prochlorococcus.</title>
        <authorList>
            <person name="Kettler G.C."/>
            <person name="Martiny A.C."/>
            <person name="Huang K."/>
            <person name="Zucker J."/>
            <person name="Coleman M.L."/>
            <person name="Rodrigue S."/>
            <person name="Chen F."/>
            <person name="Lapidus A."/>
            <person name="Ferriera S."/>
            <person name="Johnson J."/>
            <person name="Steglich C."/>
            <person name="Church G.M."/>
            <person name="Richardson P."/>
            <person name="Chisholm S.W."/>
        </authorList>
    </citation>
    <scope>NUCLEOTIDE SEQUENCE [LARGE SCALE GENOMIC DNA]</scope>
    <source>
        <strain>NATL1A</strain>
    </source>
</reference>
<comment type="function">
    <text evidence="1">NDH-1 shuttles electrons from an unknown electron donor, via FMN and iron-sulfur (Fe-S) centers, to quinones in the respiratory and/or the photosynthetic chain. The immediate electron acceptor for the enzyme in this species is believed to be plastoquinone. Couples the redox reaction to proton translocation, and thus conserves the redox energy in a proton gradient. Cyanobacterial NDH-1 also plays a role in inorganic carbon-concentration.</text>
</comment>
<comment type="catalytic activity">
    <reaction evidence="1">
        <text>a plastoquinone + NADH + (n+1) H(+)(in) = a plastoquinol + NAD(+) + n H(+)(out)</text>
        <dbReference type="Rhea" id="RHEA:42608"/>
        <dbReference type="Rhea" id="RHEA-COMP:9561"/>
        <dbReference type="Rhea" id="RHEA-COMP:9562"/>
        <dbReference type="ChEBI" id="CHEBI:15378"/>
        <dbReference type="ChEBI" id="CHEBI:17757"/>
        <dbReference type="ChEBI" id="CHEBI:57540"/>
        <dbReference type="ChEBI" id="CHEBI:57945"/>
        <dbReference type="ChEBI" id="CHEBI:62192"/>
    </reaction>
</comment>
<comment type="catalytic activity">
    <reaction evidence="1">
        <text>a plastoquinone + NADPH + (n+1) H(+)(in) = a plastoquinol + NADP(+) + n H(+)(out)</text>
        <dbReference type="Rhea" id="RHEA:42612"/>
        <dbReference type="Rhea" id="RHEA-COMP:9561"/>
        <dbReference type="Rhea" id="RHEA-COMP:9562"/>
        <dbReference type="ChEBI" id="CHEBI:15378"/>
        <dbReference type="ChEBI" id="CHEBI:17757"/>
        <dbReference type="ChEBI" id="CHEBI:57783"/>
        <dbReference type="ChEBI" id="CHEBI:58349"/>
        <dbReference type="ChEBI" id="CHEBI:62192"/>
    </reaction>
</comment>
<comment type="subunit">
    <text evidence="1">NDH-1 can be composed of about 15 different subunits; different subcomplexes with different compositions have been identified which probably have different functions.</text>
</comment>
<comment type="subcellular location">
    <subcellularLocation>
        <location evidence="1">Cellular thylakoid membrane</location>
        <topology evidence="1">Peripheral membrane protein</topology>
        <orientation evidence="1">Cytoplasmic side</orientation>
    </subcellularLocation>
</comment>
<comment type="similarity">
    <text evidence="1">Belongs to the complex I 30 kDa subunit family.</text>
</comment>
<sequence>MTNDSEIVVEEKISGPISDWLSNKGFENIPLKEDHLGIEVIKISPNNLLSIVEALKNDGFNYLQCQGGYDEGPGLNIVCFYNLIEMNELKEDISPREVRLKVFLDRNGDLTVPSLYSLFRGADWQERETFDMYGVNFKGHPHPKRLLMPEDWKGWPLRKDYVQPDFYEMQDAY</sequence>